<organism>
    <name type="scientific">Orgyia pseudotsugata multicapsid polyhedrosis virus</name>
    <name type="common">OpMNPV</name>
    <dbReference type="NCBI Taxonomy" id="262177"/>
    <lineage>
        <taxon>Viruses</taxon>
        <taxon>Viruses incertae sedis</taxon>
        <taxon>Naldaviricetes</taxon>
        <taxon>Lefavirales</taxon>
        <taxon>Baculoviridae</taxon>
        <taxon>Alphabaculovirus</taxon>
        <taxon>Alphabaculovirus orpseudotsugatae</taxon>
    </lineage>
</organism>
<name>Y117_NPVOP</name>
<organismHost>
    <name type="scientific">Orgyia pseudotsugata</name>
    <name type="common">Douglas-fir tussock moth</name>
    <dbReference type="NCBI Taxonomy" id="33414"/>
</organismHost>
<keyword id="KW-1185">Reference proteome</keyword>
<protein>
    <recommendedName>
        <fullName>Uncharacterized 11.2 kDa protein</fullName>
    </recommendedName>
</protein>
<accession>O10356</accession>
<reference key="1">
    <citation type="journal article" date="1997" name="Virology">
        <title>The sequence of the Orgyia pseudotsugata multinucleocapsid nuclear polyhedrosis virus genome.</title>
        <authorList>
            <person name="Ahrens C.H."/>
            <person name="Russell R.R."/>
            <person name="Funk C.J."/>
            <person name="Evans J."/>
            <person name="Harwood S."/>
            <person name="Rohrmann G.F."/>
        </authorList>
    </citation>
    <scope>NUCLEOTIDE SEQUENCE [LARGE SCALE GENOMIC DNA]</scope>
</reference>
<gene>
    <name type="ORF">ORF117</name>
</gene>
<feature type="chain" id="PRO_0000133057" description="Uncharacterized 11.2 kDa protein">
    <location>
        <begin position="1"/>
        <end position="97"/>
    </location>
</feature>
<dbReference type="EMBL" id="U75930">
    <property type="protein sequence ID" value="AAC59116.1"/>
    <property type="molecule type" value="Genomic_DNA"/>
</dbReference>
<dbReference type="RefSeq" id="NP_046273.1">
    <property type="nucleotide sequence ID" value="NC_001875.2"/>
</dbReference>
<dbReference type="SMR" id="O10356"/>
<dbReference type="KEGG" id="vg:912050"/>
<dbReference type="OrthoDB" id="22343at10239"/>
<dbReference type="Proteomes" id="UP000009248">
    <property type="component" value="Genome"/>
</dbReference>
<dbReference type="InterPro" id="IPR012428">
    <property type="entry name" value="AcMNPV_Orf117"/>
</dbReference>
<dbReference type="Pfam" id="PF07785">
    <property type="entry name" value="DUF1623"/>
    <property type="match status" value="1"/>
</dbReference>
<sequence>MPLTANVLYVSNKLDFVFDLQKCFVVEQLQCYNRDSLALVVTSDSVSCPSELVHTKDTFERSQLELLEKAEFSVQIVDHLRLKIRHIVNKYNETFAD</sequence>
<proteinExistence type="predicted"/>